<dbReference type="EC" id="1.17.7.3" evidence="1"/>
<dbReference type="EMBL" id="CP000758">
    <property type="protein sequence ID" value="ABS13843.1"/>
    <property type="molecule type" value="Genomic_DNA"/>
</dbReference>
<dbReference type="RefSeq" id="WP_010661447.1">
    <property type="nucleotide sequence ID" value="NC_009667.1"/>
</dbReference>
<dbReference type="SMR" id="A6WXY9"/>
<dbReference type="STRING" id="439375.Oant_1123"/>
<dbReference type="GeneID" id="61318378"/>
<dbReference type="KEGG" id="oan:Oant_1123"/>
<dbReference type="eggNOG" id="COG0821">
    <property type="taxonomic scope" value="Bacteria"/>
</dbReference>
<dbReference type="HOGENOM" id="CLU_042258_1_0_5"/>
<dbReference type="PhylomeDB" id="A6WXY9"/>
<dbReference type="UniPathway" id="UPA00056">
    <property type="reaction ID" value="UER00096"/>
</dbReference>
<dbReference type="Proteomes" id="UP000002301">
    <property type="component" value="Chromosome 1"/>
</dbReference>
<dbReference type="GO" id="GO:0051539">
    <property type="term" value="F:4 iron, 4 sulfur cluster binding"/>
    <property type="evidence" value="ECO:0007669"/>
    <property type="project" value="UniProtKB-UniRule"/>
</dbReference>
<dbReference type="GO" id="GO:0046429">
    <property type="term" value="F:4-hydroxy-3-methylbut-2-en-1-yl diphosphate synthase activity (ferredoxin)"/>
    <property type="evidence" value="ECO:0007669"/>
    <property type="project" value="UniProtKB-UniRule"/>
</dbReference>
<dbReference type="GO" id="GO:0141197">
    <property type="term" value="F:4-hydroxy-3-methylbut-2-enyl-diphosphate synthase activity (flavodoxin)"/>
    <property type="evidence" value="ECO:0007669"/>
    <property type="project" value="UniProtKB-EC"/>
</dbReference>
<dbReference type="GO" id="GO:0005506">
    <property type="term" value="F:iron ion binding"/>
    <property type="evidence" value="ECO:0007669"/>
    <property type="project" value="InterPro"/>
</dbReference>
<dbReference type="GO" id="GO:0019288">
    <property type="term" value="P:isopentenyl diphosphate biosynthetic process, methylerythritol 4-phosphate pathway"/>
    <property type="evidence" value="ECO:0007669"/>
    <property type="project" value="UniProtKB-UniRule"/>
</dbReference>
<dbReference type="GO" id="GO:0016114">
    <property type="term" value="P:terpenoid biosynthetic process"/>
    <property type="evidence" value="ECO:0007669"/>
    <property type="project" value="InterPro"/>
</dbReference>
<dbReference type="FunFam" id="3.30.413.10:FF:000012">
    <property type="entry name" value="4-hydroxy-3-methylbut-2-en-1-yl diphosphate synthase (flavodoxin)"/>
    <property type="match status" value="1"/>
</dbReference>
<dbReference type="Gene3D" id="3.20.20.20">
    <property type="entry name" value="Dihydropteroate synthase-like"/>
    <property type="match status" value="1"/>
</dbReference>
<dbReference type="Gene3D" id="3.30.413.10">
    <property type="entry name" value="Sulfite Reductase Hemoprotein, domain 1"/>
    <property type="match status" value="1"/>
</dbReference>
<dbReference type="HAMAP" id="MF_00159">
    <property type="entry name" value="IspG"/>
    <property type="match status" value="1"/>
</dbReference>
<dbReference type="InterPro" id="IPR011005">
    <property type="entry name" value="Dihydropteroate_synth-like_sf"/>
</dbReference>
<dbReference type="InterPro" id="IPR016425">
    <property type="entry name" value="IspG_bac"/>
</dbReference>
<dbReference type="InterPro" id="IPR004588">
    <property type="entry name" value="IspG_bac-typ"/>
</dbReference>
<dbReference type="InterPro" id="IPR045854">
    <property type="entry name" value="NO2/SO3_Rdtase_4Fe4S_sf"/>
</dbReference>
<dbReference type="NCBIfam" id="TIGR00612">
    <property type="entry name" value="ispG_gcpE"/>
    <property type="match status" value="1"/>
</dbReference>
<dbReference type="NCBIfam" id="NF001540">
    <property type="entry name" value="PRK00366.1"/>
    <property type="match status" value="1"/>
</dbReference>
<dbReference type="PANTHER" id="PTHR30454">
    <property type="entry name" value="4-HYDROXY-3-METHYLBUT-2-EN-1-YL DIPHOSPHATE SYNTHASE"/>
    <property type="match status" value="1"/>
</dbReference>
<dbReference type="PANTHER" id="PTHR30454:SF0">
    <property type="entry name" value="4-HYDROXY-3-METHYLBUT-2-EN-1-YL DIPHOSPHATE SYNTHASE (FERREDOXIN), CHLOROPLASTIC"/>
    <property type="match status" value="1"/>
</dbReference>
<dbReference type="Pfam" id="PF04551">
    <property type="entry name" value="GcpE"/>
    <property type="match status" value="1"/>
</dbReference>
<dbReference type="PIRSF" id="PIRSF004640">
    <property type="entry name" value="IspG"/>
    <property type="match status" value="1"/>
</dbReference>
<dbReference type="SUPFAM" id="SSF56014">
    <property type="entry name" value="Nitrite and sulphite reductase 4Fe-4S domain-like"/>
    <property type="match status" value="1"/>
</dbReference>
<comment type="function">
    <text evidence="1">Converts 2C-methyl-D-erythritol 2,4-cyclodiphosphate (ME-2,4cPP) into 1-hydroxy-2-methyl-2-(E)-butenyl 4-diphosphate.</text>
</comment>
<comment type="catalytic activity">
    <reaction evidence="1">
        <text>(2E)-4-hydroxy-3-methylbut-2-enyl diphosphate + oxidized [flavodoxin] + H2O + 2 H(+) = 2-C-methyl-D-erythritol 2,4-cyclic diphosphate + reduced [flavodoxin]</text>
        <dbReference type="Rhea" id="RHEA:43604"/>
        <dbReference type="Rhea" id="RHEA-COMP:10622"/>
        <dbReference type="Rhea" id="RHEA-COMP:10623"/>
        <dbReference type="ChEBI" id="CHEBI:15377"/>
        <dbReference type="ChEBI" id="CHEBI:15378"/>
        <dbReference type="ChEBI" id="CHEBI:57618"/>
        <dbReference type="ChEBI" id="CHEBI:58210"/>
        <dbReference type="ChEBI" id="CHEBI:58483"/>
        <dbReference type="ChEBI" id="CHEBI:128753"/>
        <dbReference type="EC" id="1.17.7.3"/>
    </reaction>
</comment>
<comment type="cofactor">
    <cofactor evidence="1">
        <name>[4Fe-4S] cluster</name>
        <dbReference type="ChEBI" id="CHEBI:49883"/>
    </cofactor>
    <text evidence="1">Binds 1 [4Fe-4S] cluster.</text>
</comment>
<comment type="pathway">
    <text evidence="1">Isoprenoid biosynthesis; isopentenyl diphosphate biosynthesis via DXP pathway; isopentenyl diphosphate from 1-deoxy-D-xylulose 5-phosphate: step 5/6.</text>
</comment>
<comment type="similarity">
    <text evidence="1">Belongs to the IspG family.</text>
</comment>
<protein>
    <recommendedName>
        <fullName evidence="1">4-hydroxy-3-methylbut-2-en-1-yl diphosphate synthase (flavodoxin)</fullName>
        <ecNumber evidence="1">1.17.7.3</ecNumber>
    </recommendedName>
    <alternativeName>
        <fullName evidence="1">1-hydroxy-2-methyl-2-(E)-butenyl 4-diphosphate synthase</fullName>
    </alternativeName>
</protein>
<keyword id="KW-0004">4Fe-4S</keyword>
<keyword id="KW-0408">Iron</keyword>
<keyword id="KW-0411">Iron-sulfur</keyword>
<keyword id="KW-0414">Isoprene biosynthesis</keyword>
<keyword id="KW-0479">Metal-binding</keyword>
<keyword id="KW-0560">Oxidoreductase</keyword>
<keyword id="KW-1185">Reference proteome</keyword>
<feature type="chain" id="PRO_1000011491" description="4-hydroxy-3-methylbut-2-en-1-yl diphosphate synthase (flavodoxin)">
    <location>
        <begin position="1"/>
        <end position="423"/>
    </location>
</feature>
<feature type="binding site" evidence="1">
    <location>
        <position position="307"/>
    </location>
    <ligand>
        <name>[4Fe-4S] cluster</name>
        <dbReference type="ChEBI" id="CHEBI:49883"/>
    </ligand>
</feature>
<feature type="binding site" evidence="1">
    <location>
        <position position="310"/>
    </location>
    <ligand>
        <name>[4Fe-4S] cluster</name>
        <dbReference type="ChEBI" id="CHEBI:49883"/>
    </ligand>
</feature>
<feature type="binding site" evidence="1">
    <location>
        <position position="353"/>
    </location>
    <ligand>
        <name>[4Fe-4S] cluster</name>
        <dbReference type="ChEBI" id="CHEBI:49883"/>
    </ligand>
</feature>
<feature type="binding site" evidence="1">
    <location>
        <position position="360"/>
    </location>
    <ligand>
        <name>[4Fe-4S] cluster</name>
        <dbReference type="ChEBI" id="CHEBI:49883"/>
    </ligand>
</feature>
<accession>A6WXY9</accession>
<gene>
    <name evidence="1" type="primary">ispG</name>
    <name type="ordered locus">Oant_1123</name>
</gene>
<organism>
    <name type="scientific">Brucella anthropi (strain ATCC 49188 / DSM 6882 / CCUG 24695 / JCM 21032 / LMG 3331 / NBRC 15819 / NCTC 12168 / Alc 37)</name>
    <name type="common">Ochrobactrum anthropi</name>
    <dbReference type="NCBI Taxonomy" id="439375"/>
    <lineage>
        <taxon>Bacteria</taxon>
        <taxon>Pseudomonadati</taxon>
        <taxon>Pseudomonadota</taxon>
        <taxon>Alphaproteobacteria</taxon>
        <taxon>Hyphomicrobiales</taxon>
        <taxon>Brucellaceae</taxon>
        <taxon>Brucella/Ochrobactrum group</taxon>
        <taxon>Brucella</taxon>
    </lineage>
</organism>
<reference key="1">
    <citation type="journal article" date="2011" name="J. Bacteriol.">
        <title>Genome of Ochrobactrum anthropi ATCC 49188 T, a versatile opportunistic pathogen and symbiont of several eukaryotic hosts.</title>
        <authorList>
            <person name="Chain P.S."/>
            <person name="Lang D.M."/>
            <person name="Comerci D.J."/>
            <person name="Malfatti S.A."/>
            <person name="Vergez L.M."/>
            <person name="Shin M."/>
            <person name="Ugalde R.A."/>
            <person name="Garcia E."/>
            <person name="Tolmasky M.E."/>
        </authorList>
    </citation>
    <scope>NUCLEOTIDE SEQUENCE [LARGE SCALE GENOMIC DNA]</scope>
    <source>
        <strain>ATCC 49188 / DSM 6882 / CCUG 24695 / JCM 21032 / LMG 3331 / NBRC 15819 / NCTC 12168 / Alc 37</strain>
    </source>
</reference>
<sequence length="423" mass="45359">MSSEAVSYFSHPFPRRQSVGVSVGGVIVGGSAPVVVQSMTNTDTADVDSTVAQVAALHRAGSEIVRITVDRDESAAAVPKIRERLERLGHDVPLVGDFHYIGHKLLADHPACAEALAKYRINPGNVGFKDKKDKQFADIVEMAIRYDKPVRIGVNWGSLDQELLTTLMDRNQDAGAPLSAQEVMREAIVQSALISANLAEEIGLGRDKIILSAKVSQVQDLIAVYTMLAQRSNHALHLGLTEAGMGTKGIVASSAAMGILLQQGIGDTIRISLTPEPGGDRTREVQVSQELLQTMGFRQFIPIVAACPGCGRTTSTVFQELAQTIQDDIRRNMPVWREKYPGVEALSVAVMGCIVNGPGESKHADIGISLPGTGETPSAPVFVDGKKVTTLRGPAIAEDFQKMVADYIENRFGLDQKIAAGQN</sequence>
<evidence type="ECO:0000255" key="1">
    <source>
        <dbReference type="HAMAP-Rule" id="MF_00159"/>
    </source>
</evidence>
<name>ISPG_BRUA4</name>
<proteinExistence type="inferred from homology"/>